<dbReference type="EC" id="3.4.24.64" evidence="3"/>
<dbReference type="EMBL" id="CR857522">
    <property type="protein sequence ID" value="CAH89804.1"/>
    <property type="molecule type" value="mRNA"/>
</dbReference>
<dbReference type="RefSeq" id="NP_001127198.1">
    <property type="nucleotide sequence ID" value="NM_001133726.1"/>
</dbReference>
<dbReference type="SMR" id="Q5REK3"/>
<dbReference type="FunCoup" id="Q5REK3">
    <property type="interactions" value="3027"/>
</dbReference>
<dbReference type="STRING" id="9601.ENSPPYP00000020042"/>
<dbReference type="MEROPS" id="M16.973"/>
<dbReference type="GeneID" id="100174253"/>
<dbReference type="KEGG" id="pon:100174253"/>
<dbReference type="CTD" id="9512"/>
<dbReference type="eggNOG" id="KOG0960">
    <property type="taxonomic scope" value="Eukaryota"/>
</dbReference>
<dbReference type="InParanoid" id="Q5REK3"/>
<dbReference type="OrthoDB" id="10251424at2759"/>
<dbReference type="Proteomes" id="UP000001595">
    <property type="component" value="Unplaced"/>
</dbReference>
<dbReference type="GO" id="GO:0005759">
    <property type="term" value="C:mitochondrial matrix"/>
    <property type="evidence" value="ECO:0007669"/>
    <property type="project" value="UniProtKB-SubCell"/>
</dbReference>
<dbReference type="GO" id="GO:0046872">
    <property type="term" value="F:metal ion binding"/>
    <property type="evidence" value="ECO:0007669"/>
    <property type="project" value="UniProtKB-KW"/>
</dbReference>
<dbReference type="GO" id="GO:0004222">
    <property type="term" value="F:metalloendopeptidase activity"/>
    <property type="evidence" value="ECO:0007669"/>
    <property type="project" value="UniProtKB-EC"/>
</dbReference>
<dbReference type="GO" id="GO:0006627">
    <property type="term" value="P:protein processing involved in protein targeting to mitochondrion"/>
    <property type="evidence" value="ECO:0007669"/>
    <property type="project" value="TreeGrafter"/>
</dbReference>
<dbReference type="FunFam" id="3.30.830.10:FF:000002">
    <property type="entry name" value="Mitochondrial-processing peptidase subunit beta"/>
    <property type="match status" value="1"/>
</dbReference>
<dbReference type="FunFam" id="3.30.830.10:FF:000001">
    <property type="entry name" value="Mitochondrial-processing peptidase subunit beta, mitochondrial"/>
    <property type="match status" value="1"/>
</dbReference>
<dbReference type="Gene3D" id="3.30.830.10">
    <property type="entry name" value="Metalloenzyme, LuxS/M16 peptidase-like"/>
    <property type="match status" value="2"/>
</dbReference>
<dbReference type="InterPro" id="IPR011249">
    <property type="entry name" value="Metalloenz_LuxS/M16"/>
</dbReference>
<dbReference type="InterPro" id="IPR050361">
    <property type="entry name" value="MPP/UQCRC_Complex"/>
</dbReference>
<dbReference type="InterPro" id="IPR011765">
    <property type="entry name" value="Pept_M16_N"/>
</dbReference>
<dbReference type="InterPro" id="IPR001431">
    <property type="entry name" value="Pept_M16_Zn_BS"/>
</dbReference>
<dbReference type="InterPro" id="IPR007863">
    <property type="entry name" value="Peptidase_M16_C"/>
</dbReference>
<dbReference type="PANTHER" id="PTHR11851">
    <property type="entry name" value="METALLOPROTEASE"/>
    <property type="match status" value="1"/>
</dbReference>
<dbReference type="PANTHER" id="PTHR11851:SF103">
    <property type="entry name" value="MITOCHONDRIAL-PROCESSING PEPTIDASE SUBUNIT BETA"/>
    <property type="match status" value="1"/>
</dbReference>
<dbReference type="Pfam" id="PF00675">
    <property type="entry name" value="Peptidase_M16"/>
    <property type="match status" value="1"/>
</dbReference>
<dbReference type="Pfam" id="PF05193">
    <property type="entry name" value="Peptidase_M16_C"/>
    <property type="match status" value="1"/>
</dbReference>
<dbReference type="SUPFAM" id="SSF63411">
    <property type="entry name" value="LuxS/MPP-like metallohydrolase"/>
    <property type="match status" value="2"/>
</dbReference>
<dbReference type="PROSITE" id="PS00143">
    <property type="entry name" value="INSULINASE"/>
    <property type="match status" value="1"/>
</dbReference>
<accession>Q5REK3</accession>
<name>MPPB_PONAB</name>
<sequence>MAAAAARVVLLPAARRRLWGFSESLLIRGAAGRSSYFGENRLRSTQAATQVVLNVPETRVTCLESGLRVASEDSGLSTCTVGLWIDAGSRYENEKNNGTAHFLEHMAFKGTKKRSQLDLELEIENMGAHLNAYTSREQTVYYAKAFSKDLPRAVEILADIIQNSTLGEAEIERERGVILREMQEVETNLQEVVFDYLHATAYQNTALGRTILGPTENIKSISRKDLVDYITTHYKGPRIVLAAAGGVSHDELLDLAKFHFGDSLCTHKGEIPALPPCKFTGSEIRVRDDKMPLAHLAIAVEAVGWAHPDTICLMVANTLIGNWDRSFGGGMNLSSKLAQLTCHGNLCHSFQSFNTSYTDTGLWGLYMVCEPSTVADMLHVVQKEWMRLCTSVTESEVARARNLLKTNMLLQLDGSTPICEDIGRQMLCYNRRIPIPELEARIDAVNAETIREVCTKYIYNRSPAIAAVGPIEQLPDFKQICSNMCWLRD</sequence>
<proteinExistence type="evidence at transcript level"/>
<keyword id="KW-0378">Hydrolase</keyword>
<keyword id="KW-0479">Metal-binding</keyword>
<keyword id="KW-0482">Metalloprotease</keyword>
<keyword id="KW-0496">Mitochondrion</keyword>
<keyword id="KW-0645">Protease</keyword>
<keyword id="KW-1185">Reference proteome</keyword>
<keyword id="KW-0809">Transit peptide</keyword>
<keyword id="KW-0862">Zinc</keyword>
<protein>
    <recommendedName>
        <fullName>Mitochondrial-processing peptidase subunit beta</fullName>
        <ecNumber evidence="3">3.4.24.64</ecNumber>
    </recommendedName>
    <alternativeName>
        <fullName>Beta-MPP</fullName>
    </alternativeName>
</protein>
<feature type="transit peptide" description="Mitochondrion" evidence="1">
    <location>
        <begin position="1"/>
        <end position="45"/>
    </location>
</feature>
<feature type="chain" id="PRO_0000045851" description="Mitochondrial-processing peptidase subunit beta">
    <location>
        <begin position="46"/>
        <end position="489"/>
    </location>
</feature>
<feature type="active site" description="Proton acceptor" evidence="4">
    <location>
        <position position="104"/>
    </location>
</feature>
<feature type="binding site" evidence="4">
    <location>
        <position position="101"/>
    </location>
    <ligand>
        <name>Zn(2+)</name>
        <dbReference type="ChEBI" id="CHEBI:29105"/>
    </ligand>
</feature>
<feature type="binding site" evidence="4">
    <location>
        <position position="105"/>
    </location>
    <ligand>
        <name>Zn(2+)</name>
        <dbReference type="ChEBI" id="CHEBI:29105"/>
    </ligand>
</feature>
<feature type="binding site" evidence="4">
    <location>
        <position position="181"/>
    </location>
    <ligand>
        <name>Zn(2+)</name>
        <dbReference type="ChEBI" id="CHEBI:29105"/>
    </ligand>
</feature>
<feature type="site" description="Required for the specific determination of the substrate cleavage site" evidence="3">
    <location>
        <position position="191"/>
    </location>
</feature>
<feature type="site" description="Required for the specific determination of the substrate cleavage site" evidence="3">
    <location>
        <position position="195"/>
    </location>
</feature>
<comment type="function">
    <text evidence="1 3">Catalytic subunit of the essential mitochondrial processing protease (MPP), which cleaves the mitochondrial sequence off newly imported precursors proteins (By similarity). Preferentially, cleaves after an arginine at position P2 (By similarity). Required for PINK1 turnover by coupling PINK1 mitochondrial import and cleavage, which results in subsequent PINK1 proteolysis (By similarity).</text>
</comment>
<comment type="catalytic activity">
    <reaction evidence="3">
        <text>Release of N-terminal transit peptides from precursor proteins imported into the mitochondrion, typically with Arg in position P2.</text>
        <dbReference type="EC" id="3.4.24.64"/>
    </reaction>
</comment>
<comment type="cofactor">
    <cofactor evidence="2">
        <name>Zn(2+)</name>
        <dbReference type="ChEBI" id="CHEBI:29105"/>
    </cofactor>
    <text evidence="2">Binds 1 zinc ion per subunit.</text>
</comment>
<comment type="activity regulation">
    <text evidence="2">Binding to PMPCA is required for catalytic activity.</text>
</comment>
<comment type="subunit">
    <text evidence="2">Heterodimer of PMPCA (alpha) and PMPCB (beta) subunits, forming the mitochondrial processing protease (MPP) in which PMPCA is involved in substrate recognition and binding and PMPCB is the catalytic subunit.</text>
</comment>
<comment type="subcellular location">
    <subcellularLocation>
        <location evidence="1">Mitochondrion matrix</location>
    </subcellularLocation>
</comment>
<comment type="similarity">
    <text evidence="5">Belongs to the peptidase M16 family.</text>
</comment>
<organism>
    <name type="scientific">Pongo abelii</name>
    <name type="common">Sumatran orangutan</name>
    <name type="synonym">Pongo pygmaeus abelii</name>
    <dbReference type="NCBI Taxonomy" id="9601"/>
    <lineage>
        <taxon>Eukaryota</taxon>
        <taxon>Metazoa</taxon>
        <taxon>Chordata</taxon>
        <taxon>Craniata</taxon>
        <taxon>Vertebrata</taxon>
        <taxon>Euteleostomi</taxon>
        <taxon>Mammalia</taxon>
        <taxon>Eutheria</taxon>
        <taxon>Euarchontoglires</taxon>
        <taxon>Primates</taxon>
        <taxon>Haplorrhini</taxon>
        <taxon>Catarrhini</taxon>
        <taxon>Hominidae</taxon>
        <taxon>Pongo</taxon>
    </lineage>
</organism>
<gene>
    <name type="primary">PMPCB</name>
</gene>
<evidence type="ECO:0000250" key="1">
    <source>
        <dbReference type="UniProtKB" id="O75439"/>
    </source>
</evidence>
<evidence type="ECO:0000250" key="2">
    <source>
        <dbReference type="UniProtKB" id="P10507"/>
    </source>
</evidence>
<evidence type="ECO:0000250" key="3">
    <source>
        <dbReference type="UniProtKB" id="Q03346"/>
    </source>
</evidence>
<evidence type="ECO:0000255" key="4">
    <source>
        <dbReference type="PROSITE-ProRule" id="PRU10096"/>
    </source>
</evidence>
<evidence type="ECO:0000305" key="5"/>
<reference key="1">
    <citation type="submission" date="2004-11" db="EMBL/GenBank/DDBJ databases">
        <authorList>
            <consortium name="The German cDNA consortium"/>
        </authorList>
    </citation>
    <scope>NUCLEOTIDE SEQUENCE [LARGE SCALE MRNA]</scope>
    <source>
        <tissue>Heart</tissue>
    </source>
</reference>